<sequence>MVSFSSLFVAACAAVTAFALPNELEKRAITSNEQGTNNGYFYSFWTNGGGSVSYNNGAAGQYSVNWKDCGSFTSGKGWATGSARNINFSGSFNPSGNAYLAVYGWTTSPLVEYYIMENYGEYNPGSSMAHKGTVTSDGSVYDIYAHQQVNQPSIVGTATFNQYWSIRRNKRSSGTVTTANHFNAWSRLGMGLGSHNYQIVNTEGYQSSGSASITVS</sequence>
<evidence type="ECO:0000255" key="1"/>
<evidence type="ECO:0000255" key="2">
    <source>
        <dbReference type="PROSITE-ProRule" id="PRU01097"/>
    </source>
</evidence>
<evidence type="ECO:0000255" key="3">
    <source>
        <dbReference type="PROSITE-ProRule" id="PRU10062"/>
    </source>
</evidence>
<evidence type="ECO:0000255" key="4">
    <source>
        <dbReference type="PROSITE-ProRule" id="PRU10063"/>
    </source>
</evidence>
<evidence type="ECO:0000269" key="5">
    <source>
    </source>
</evidence>
<evidence type="ECO:0000305" key="6"/>
<dbReference type="EC" id="3.2.1.8"/>
<dbReference type="EMBL" id="KF640267">
    <property type="protein sequence ID" value="AHF72524.1"/>
    <property type="molecule type" value="Genomic_DNA"/>
</dbReference>
<dbReference type="SMR" id="W0HJ53"/>
<dbReference type="CAZy" id="GH11">
    <property type="family name" value="Glycoside Hydrolase Family 11"/>
</dbReference>
<dbReference type="GlyCosmos" id="W0HJ53">
    <property type="glycosylation" value="1 site, No reported glycans"/>
</dbReference>
<dbReference type="UniPathway" id="UPA00114"/>
<dbReference type="GO" id="GO:0005576">
    <property type="term" value="C:extracellular region"/>
    <property type="evidence" value="ECO:0007669"/>
    <property type="project" value="UniProtKB-SubCell"/>
</dbReference>
<dbReference type="GO" id="GO:0031176">
    <property type="term" value="F:endo-1,4-beta-xylanase activity"/>
    <property type="evidence" value="ECO:0007669"/>
    <property type="project" value="UniProtKB-EC"/>
</dbReference>
<dbReference type="GO" id="GO:0045493">
    <property type="term" value="P:xylan catabolic process"/>
    <property type="evidence" value="ECO:0007669"/>
    <property type="project" value="UniProtKB-UniPathway"/>
</dbReference>
<dbReference type="FunFam" id="2.60.120.180:FF:000001">
    <property type="entry name" value="Endo-1,4-beta-xylanase"/>
    <property type="match status" value="1"/>
</dbReference>
<dbReference type="Gene3D" id="2.60.120.180">
    <property type="match status" value="1"/>
</dbReference>
<dbReference type="InterPro" id="IPR013320">
    <property type="entry name" value="ConA-like_dom_sf"/>
</dbReference>
<dbReference type="InterPro" id="IPR013319">
    <property type="entry name" value="GH11/12"/>
</dbReference>
<dbReference type="InterPro" id="IPR018208">
    <property type="entry name" value="GH11_AS_1"/>
</dbReference>
<dbReference type="InterPro" id="IPR033119">
    <property type="entry name" value="GH11_AS_2"/>
</dbReference>
<dbReference type="InterPro" id="IPR033123">
    <property type="entry name" value="GH11_dom"/>
</dbReference>
<dbReference type="InterPro" id="IPR001137">
    <property type="entry name" value="Glyco_hydro_11"/>
</dbReference>
<dbReference type="PANTHER" id="PTHR46828:SF4">
    <property type="entry name" value="ENDO-1,4-BETA-XYLANASE"/>
    <property type="match status" value="1"/>
</dbReference>
<dbReference type="PANTHER" id="PTHR46828">
    <property type="entry name" value="ENDO-1,4-BETA-XYLANASE A-RELATED"/>
    <property type="match status" value="1"/>
</dbReference>
<dbReference type="Pfam" id="PF00457">
    <property type="entry name" value="Glyco_hydro_11"/>
    <property type="match status" value="1"/>
</dbReference>
<dbReference type="PRINTS" id="PR00911">
    <property type="entry name" value="GLHYDRLASE11"/>
</dbReference>
<dbReference type="SUPFAM" id="SSF49899">
    <property type="entry name" value="Concanavalin A-like lectins/glucanases"/>
    <property type="match status" value="1"/>
</dbReference>
<dbReference type="PROSITE" id="PS00776">
    <property type="entry name" value="GH11_1"/>
    <property type="match status" value="1"/>
</dbReference>
<dbReference type="PROSITE" id="PS00777">
    <property type="entry name" value="GH11_2"/>
    <property type="match status" value="1"/>
</dbReference>
<dbReference type="PROSITE" id="PS51761">
    <property type="entry name" value="GH11_3"/>
    <property type="match status" value="1"/>
</dbReference>
<comment type="function">
    <text evidence="5">Endo-1,4-beta-xylanase involved in the hydrolysis of xylan, a major structural heterogeneous polysaccharide found in plant biomass representing the second most abundant polysaccharide in the biosphere, after cellulose.</text>
</comment>
<comment type="catalytic activity">
    <reaction evidence="5">
        <text>Endohydrolysis of (1-&gt;4)-beta-D-xylosidic linkages in xylans.</text>
        <dbReference type="EC" id="3.2.1.8"/>
    </reaction>
</comment>
<comment type="biophysicochemical properties">
    <kinetics>
        <KM evidence="5">3.2 mg/ml for birchwood xylan</KM>
    </kinetics>
    <phDependence>
        <text evidence="5">Optimum pH is 5.0-6.0.</text>
    </phDependence>
    <temperatureDependence>
        <text evidence="5">Optimum temperature is 70 degrees Celsius.</text>
    </temperatureDependence>
</comment>
<comment type="pathway">
    <text>Glycan degradation; xylan degradation.</text>
</comment>
<comment type="subcellular location">
    <subcellularLocation>
        <location evidence="5">Secreted</location>
    </subcellularLocation>
</comment>
<comment type="similarity">
    <text evidence="6">Belongs to the glycosyl hydrolase 11 (cellulase G) family.</text>
</comment>
<accession>W0HJ53</accession>
<gene>
    <name type="primary">xyn2</name>
</gene>
<organism>
    <name type="scientific">Rhizopus oryzae</name>
    <name type="common">Mucormycosis agent</name>
    <name type="synonym">Rhizopus arrhizus var. delemar</name>
    <dbReference type="NCBI Taxonomy" id="64495"/>
    <lineage>
        <taxon>Eukaryota</taxon>
        <taxon>Fungi</taxon>
        <taxon>Fungi incertae sedis</taxon>
        <taxon>Mucoromycota</taxon>
        <taxon>Mucoromycotina</taxon>
        <taxon>Mucoromycetes</taxon>
        <taxon>Mucorales</taxon>
        <taxon>Mucorineae</taxon>
        <taxon>Rhizopodaceae</taxon>
        <taxon>Rhizopus</taxon>
    </lineage>
</organism>
<proteinExistence type="evidence at protein level"/>
<keyword id="KW-0119">Carbohydrate metabolism</keyword>
<keyword id="KW-0903">Direct protein sequencing</keyword>
<keyword id="KW-0325">Glycoprotein</keyword>
<keyword id="KW-0326">Glycosidase</keyword>
<keyword id="KW-0378">Hydrolase</keyword>
<keyword id="KW-0624">Polysaccharide degradation</keyword>
<keyword id="KW-0964">Secreted</keyword>
<keyword id="KW-0732">Signal</keyword>
<keyword id="KW-0858">Xylan degradation</keyword>
<reference key="1">
    <citation type="journal article" date="2014" name="Appl. Microbiol. Biotechnol.">
        <title>Cloning and characterization of the first GH10 and GH11 xylanases from Rhizopus oryzae.</title>
        <authorList>
            <person name="Xiao Z."/>
            <person name="Grosse S."/>
            <person name="Bergeron H."/>
            <person name="Lau P.C."/>
        </authorList>
    </citation>
    <scope>NUCLEOTIDE SEQUENCE [GENOMIC DNA]</scope>
    <scope>PROTEIN SEQUENCE OF 28-36</scope>
    <scope>SUBCELLULAR LOCATION</scope>
    <scope>FUNCTION</scope>
    <scope>CATALYTIC ACTIVITY</scope>
    <scope>BIOPHYSICOCHEMICAL PROPERTIES</scope>
</reference>
<feature type="signal peptide" evidence="5">
    <location>
        <begin position="1"/>
        <end position="27"/>
    </location>
</feature>
<feature type="chain" id="PRO_0000429748" description="Endo-1,4-beta-xylanase 2">
    <location>
        <begin position="28"/>
        <end position="216"/>
    </location>
</feature>
<feature type="domain" description="GH11" evidence="2">
    <location>
        <begin position="28"/>
        <end position="216"/>
    </location>
</feature>
<feature type="active site" description="Nucleophile" evidence="3">
    <location>
        <position position="112"/>
    </location>
</feature>
<feature type="active site" description="Proton donor" evidence="4">
    <location>
        <position position="203"/>
    </location>
</feature>
<feature type="glycosylation site" description="N-linked (GlcNAc...) asparagine" evidence="1">
    <location>
        <position position="87"/>
    </location>
</feature>
<protein>
    <recommendedName>
        <fullName>Endo-1,4-beta-xylanase 2</fullName>
        <shortName>Xylanase 2</shortName>
        <ecNumber>3.2.1.8</ecNumber>
    </recommendedName>
    <alternativeName>
        <fullName>1,4-beta-D-xylan xylanohydrolase 2</fullName>
    </alternativeName>
</protein>
<name>XYN2_RHIOR</name>